<proteinExistence type="inferred from homology"/>
<dbReference type="EMBL" id="CP000384">
    <property type="protein sequence ID" value="ABG07038.1"/>
    <property type="molecule type" value="Genomic_DNA"/>
</dbReference>
<dbReference type="SMR" id="Q1BDJ6"/>
<dbReference type="KEGG" id="mmc:Mmcs_0923"/>
<dbReference type="HOGENOM" id="CLU_074237_2_1_11"/>
<dbReference type="BioCyc" id="MSP164756:G1G6O-947-MONOMER"/>
<dbReference type="GO" id="GO:0022625">
    <property type="term" value="C:cytosolic large ribosomal subunit"/>
    <property type="evidence" value="ECO:0007669"/>
    <property type="project" value="TreeGrafter"/>
</dbReference>
<dbReference type="GO" id="GO:0070180">
    <property type="term" value="F:large ribosomal subunit rRNA binding"/>
    <property type="evidence" value="ECO:0007669"/>
    <property type="project" value="UniProtKB-UniRule"/>
</dbReference>
<dbReference type="GO" id="GO:0003735">
    <property type="term" value="F:structural constituent of ribosome"/>
    <property type="evidence" value="ECO:0007669"/>
    <property type="project" value="InterPro"/>
</dbReference>
<dbReference type="GO" id="GO:0006412">
    <property type="term" value="P:translation"/>
    <property type="evidence" value="ECO:0007669"/>
    <property type="project" value="UniProtKB-UniRule"/>
</dbReference>
<dbReference type="CDD" id="cd00349">
    <property type="entry name" value="Ribosomal_L11"/>
    <property type="match status" value="1"/>
</dbReference>
<dbReference type="FunFam" id="1.10.10.250:FF:000001">
    <property type="entry name" value="50S ribosomal protein L11"/>
    <property type="match status" value="1"/>
</dbReference>
<dbReference type="FunFam" id="3.30.1550.10:FF:000001">
    <property type="entry name" value="50S ribosomal protein L11"/>
    <property type="match status" value="1"/>
</dbReference>
<dbReference type="Gene3D" id="1.10.10.250">
    <property type="entry name" value="Ribosomal protein L11, C-terminal domain"/>
    <property type="match status" value="1"/>
</dbReference>
<dbReference type="Gene3D" id="3.30.1550.10">
    <property type="entry name" value="Ribosomal protein L11/L12, N-terminal domain"/>
    <property type="match status" value="1"/>
</dbReference>
<dbReference type="HAMAP" id="MF_00736">
    <property type="entry name" value="Ribosomal_uL11"/>
    <property type="match status" value="1"/>
</dbReference>
<dbReference type="InterPro" id="IPR000911">
    <property type="entry name" value="Ribosomal_uL11"/>
</dbReference>
<dbReference type="InterPro" id="IPR006519">
    <property type="entry name" value="Ribosomal_uL11_bac-typ"/>
</dbReference>
<dbReference type="InterPro" id="IPR020783">
    <property type="entry name" value="Ribosomal_uL11_C"/>
</dbReference>
<dbReference type="InterPro" id="IPR036769">
    <property type="entry name" value="Ribosomal_uL11_C_sf"/>
</dbReference>
<dbReference type="InterPro" id="IPR020785">
    <property type="entry name" value="Ribosomal_uL11_CS"/>
</dbReference>
<dbReference type="InterPro" id="IPR020784">
    <property type="entry name" value="Ribosomal_uL11_N"/>
</dbReference>
<dbReference type="InterPro" id="IPR036796">
    <property type="entry name" value="Ribosomal_uL11_N_sf"/>
</dbReference>
<dbReference type="NCBIfam" id="TIGR01632">
    <property type="entry name" value="L11_bact"/>
    <property type="match status" value="1"/>
</dbReference>
<dbReference type="PANTHER" id="PTHR11661">
    <property type="entry name" value="60S RIBOSOMAL PROTEIN L12"/>
    <property type="match status" value="1"/>
</dbReference>
<dbReference type="PANTHER" id="PTHR11661:SF1">
    <property type="entry name" value="LARGE RIBOSOMAL SUBUNIT PROTEIN UL11M"/>
    <property type="match status" value="1"/>
</dbReference>
<dbReference type="Pfam" id="PF00298">
    <property type="entry name" value="Ribosomal_L11"/>
    <property type="match status" value="1"/>
</dbReference>
<dbReference type="Pfam" id="PF03946">
    <property type="entry name" value="Ribosomal_L11_N"/>
    <property type="match status" value="1"/>
</dbReference>
<dbReference type="SMART" id="SM00649">
    <property type="entry name" value="RL11"/>
    <property type="match status" value="1"/>
</dbReference>
<dbReference type="SUPFAM" id="SSF54747">
    <property type="entry name" value="Ribosomal L11/L12e N-terminal domain"/>
    <property type="match status" value="1"/>
</dbReference>
<dbReference type="SUPFAM" id="SSF46906">
    <property type="entry name" value="Ribosomal protein L11, C-terminal domain"/>
    <property type="match status" value="1"/>
</dbReference>
<dbReference type="PROSITE" id="PS00359">
    <property type="entry name" value="RIBOSOMAL_L11"/>
    <property type="match status" value="1"/>
</dbReference>
<gene>
    <name evidence="1" type="primary">rplK</name>
    <name type="ordered locus">Mmcs_0923</name>
</gene>
<protein>
    <recommendedName>
        <fullName evidence="1">Large ribosomal subunit protein uL11</fullName>
    </recommendedName>
    <alternativeName>
        <fullName evidence="2">50S ribosomal protein L11</fullName>
    </alternativeName>
</protein>
<feature type="chain" id="PRO_1000046223" description="Large ribosomal subunit protein uL11">
    <location>
        <begin position="1"/>
        <end position="142"/>
    </location>
</feature>
<keyword id="KW-0488">Methylation</keyword>
<keyword id="KW-0687">Ribonucleoprotein</keyword>
<keyword id="KW-0689">Ribosomal protein</keyword>
<keyword id="KW-0694">RNA-binding</keyword>
<keyword id="KW-0699">rRNA-binding</keyword>
<comment type="function">
    <text evidence="1">Forms part of the ribosomal stalk which helps the ribosome interact with GTP-bound translation factors.</text>
</comment>
<comment type="subunit">
    <text evidence="1">Part of the ribosomal stalk of the 50S ribosomal subunit. Interacts with L10 and the large rRNA to form the base of the stalk. L10 forms an elongated spine to which L12 dimers bind in a sequential fashion forming a multimeric L10(L12)X complex.</text>
</comment>
<comment type="PTM">
    <text evidence="1">One or more lysine residues are methylated.</text>
</comment>
<comment type="similarity">
    <text evidence="1">Belongs to the universal ribosomal protein uL11 family.</text>
</comment>
<accession>Q1BDJ6</accession>
<reference key="1">
    <citation type="submission" date="2006-06" db="EMBL/GenBank/DDBJ databases">
        <title>Complete sequence of chromosome of Mycobacterium sp. MCS.</title>
        <authorList>
            <consortium name="US DOE Joint Genome Institute"/>
            <person name="Copeland A."/>
            <person name="Lucas S."/>
            <person name="Lapidus A."/>
            <person name="Barry K."/>
            <person name="Detter J.C."/>
            <person name="Glavina del Rio T."/>
            <person name="Hammon N."/>
            <person name="Israni S."/>
            <person name="Dalin E."/>
            <person name="Tice H."/>
            <person name="Pitluck S."/>
            <person name="Martinez M."/>
            <person name="Schmutz J."/>
            <person name="Larimer F."/>
            <person name="Land M."/>
            <person name="Hauser L."/>
            <person name="Kyrpides N."/>
            <person name="Kim E."/>
            <person name="Miller C.D."/>
            <person name="Hughes J.E."/>
            <person name="Anderson A.J."/>
            <person name="Sims R.C."/>
            <person name="Richardson P."/>
        </authorList>
    </citation>
    <scope>NUCLEOTIDE SEQUENCE [LARGE SCALE GENOMIC DNA]</scope>
    <source>
        <strain>MCS</strain>
    </source>
</reference>
<name>RL11_MYCSS</name>
<organism>
    <name type="scientific">Mycobacterium sp. (strain MCS)</name>
    <dbReference type="NCBI Taxonomy" id="164756"/>
    <lineage>
        <taxon>Bacteria</taxon>
        <taxon>Bacillati</taxon>
        <taxon>Actinomycetota</taxon>
        <taxon>Actinomycetes</taxon>
        <taxon>Mycobacteriales</taxon>
        <taxon>Mycobacteriaceae</taxon>
        <taxon>Mycobacterium</taxon>
    </lineage>
</organism>
<sequence>MAPKKKVTGLIKLQIQAGQANPAPPVGPALGQHGVNIMEFCKAYNAATESQRGNVIPVEITVYEDRSFTFALKTPPAAKLLLKAAGVQKGSGEPHKTKVAKVTWDQVREIAETKKSDLNANDIDQAAKIIAGTARSMGITVE</sequence>
<evidence type="ECO:0000255" key="1">
    <source>
        <dbReference type="HAMAP-Rule" id="MF_00736"/>
    </source>
</evidence>
<evidence type="ECO:0000305" key="2"/>